<accession>Q12650</accession>
<comment type="function">
    <text evidence="1">Catalyzes the first intracellular reaction of sulfate assimilation, forming adenosine-5'-phosphosulfate (APS) from inorganic sulfate and ATP. Plays an important role in sulfate activation as a component of the biosynthesis pathway of sulfur-containing amino acids.</text>
</comment>
<comment type="catalytic activity">
    <reaction evidence="1">
        <text>sulfate + ATP + H(+) = adenosine 5'-phosphosulfate + diphosphate</text>
        <dbReference type="Rhea" id="RHEA:18133"/>
        <dbReference type="ChEBI" id="CHEBI:15378"/>
        <dbReference type="ChEBI" id="CHEBI:16189"/>
        <dbReference type="ChEBI" id="CHEBI:30616"/>
        <dbReference type="ChEBI" id="CHEBI:33019"/>
        <dbReference type="ChEBI" id="CHEBI:58243"/>
        <dbReference type="EC" id="2.7.7.4"/>
    </reaction>
</comment>
<comment type="activity regulation">
    <text evidence="1">Allosterically inhibited by 3'-phosphoadenosine 5'-phosphosulfate (PAPS).</text>
</comment>
<comment type="pathway">
    <text evidence="1">Sulfur metabolism; hydrogen sulfide biosynthesis; sulfite from sulfate: step 1/3.</text>
</comment>
<comment type="subunit">
    <text evidence="1 2 3">Homohexamer. Dimer of trimers.</text>
</comment>
<comment type="subcellular location">
    <subcellularLocation>
        <location evidence="1">Cytoplasm</location>
    </subcellularLocation>
</comment>
<comment type="domain">
    <text evidence="1">The adenylyl-sulfate kinase (APS kinase) is non-functional. It is involved in allosteric regulation by PAPS. PAPS binding induces a large rotational rearrangement of domains lowering the substrate affinity of the enzyme.</text>
</comment>
<comment type="similarity">
    <text evidence="1">In the N-terminal section; belongs to the sulfate adenylyltransferase family.</text>
</comment>
<comment type="similarity">
    <text evidence="1">In the C-terminal section; belongs to the APS kinase family.</text>
</comment>
<gene>
    <name evidence="1" type="primary">met3</name>
    <name type="synonym">APS</name>
</gene>
<name>MET3_PENCH</name>
<protein>
    <recommendedName>
        <fullName evidence="1">Sulfate adenylyltransferase</fullName>
        <ecNumber evidence="1">2.7.7.4</ecNumber>
    </recommendedName>
    <alternativeName>
        <fullName evidence="1">ATP-sulfurylase</fullName>
    </alternativeName>
    <alternativeName>
        <fullName evidence="1">Sulfate adenylate transferase</fullName>
        <shortName evidence="1">SAT</shortName>
    </alternativeName>
</protein>
<dbReference type="EC" id="2.7.7.4" evidence="1"/>
<dbReference type="EMBL" id="U07353">
    <property type="protein sequence ID" value="AAA20839.1"/>
    <property type="molecule type" value="mRNA"/>
</dbReference>
<dbReference type="PIR" id="A59274">
    <property type="entry name" value="A53651"/>
</dbReference>
<dbReference type="PDB" id="1I2D">
    <property type="method" value="X-ray"/>
    <property type="resolution" value="2.81 A"/>
    <property type="chains" value="A/B/C=1-572"/>
</dbReference>
<dbReference type="PDB" id="1M8P">
    <property type="method" value="X-ray"/>
    <property type="resolution" value="2.60 A"/>
    <property type="chains" value="A/B/C=1-572"/>
</dbReference>
<dbReference type="PDBsum" id="1I2D"/>
<dbReference type="PDBsum" id="1M8P"/>
<dbReference type="SMR" id="Q12650"/>
<dbReference type="BRENDA" id="2.7.7.4">
    <property type="organism ID" value="4606"/>
</dbReference>
<dbReference type="SABIO-RK" id="Q12650"/>
<dbReference type="UniPathway" id="UPA00140">
    <property type="reaction ID" value="UER00204"/>
</dbReference>
<dbReference type="EvolutionaryTrace" id="Q12650"/>
<dbReference type="GO" id="GO:0005737">
    <property type="term" value="C:cytoplasm"/>
    <property type="evidence" value="ECO:0007669"/>
    <property type="project" value="UniProtKB-SubCell"/>
</dbReference>
<dbReference type="GO" id="GO:0004020">
    <property type="term" value="F:adenylylsulfate kinase activity"/>
    <property type="evidence" value="ECO:0007669"/>
    <property type="project" value="InterPro"/>
</dbReference>
<dbReference type="GO" id="GO:0005524">
    <property type="term" value="F:ATP binding"/>
    <property type="evidence" value="ECO:0007669"/>
    <property type="project" value="UniProtKB-KW"/>
</dbReference>
<dbReference type="GO" id="GO:0004781">
    <property type="term" value="F:sulfate adenylyltransferase (ATP) activity"/>
    <property type="evidence" value="ECO:0007669"/>
    <property type="project" value="UniProtKB-UniRule"/>
</dbReference>
<dbReference type="GO" id="GO:0070814">
    <property type="term" value="P:hydrogen sulfide biosynthetic process"/>
    <property type="evidence" value="ECO:0007669"/>
    <property type="project" value="UniProtKB-UniRule"/>
</dbReference>
<dbReference type="GO" id="GO:0010134">
    <property type="term" value="P:sulfate assimilation via adenylyl sulfate reduction"/>
    <property type="evidence" value="ECO:0007669"/>
    <property type="project" value="TreeGrafter"/>
</dbReference>
<dbReference type="GO" id="GO:0019379">
    <property type="term" value="P:sulfate assimilation, phosphoadenylyl sulfate reduction by phosphoadenylyl-sulfate reductase (thioredoxin)"/>
    <property type="evidence" value="ECO:0007669"/>
    <property type="project" value="TreeGrafter"/>
</dbReference>
<dbReference type="CDD" id="cd02027">
    <property type="entry name" value="APSK"/>
    <property type="match status" value="1"/>
</dbReference>
<dbReference type="CDD" id="cd00517">
    <property type="entry name" value="ATPS"/>
    <property type="match status" value="1"/>
</dbReference>
<dbReference type="FunFam" id="3.10.400.10:FF:000003">
    <property type="entry name" value="Sulfate adenylyltransferase"/>
    <property type="match status" value="1"/>
</dbReference>
<dbReference type="FunFam" id="3.40.50.300:FF:000802">
    <property type="entry name" value="Sulfate adenylyltransferase"/>
    <property type="match status" value="1"/>
</dbReference>
<dbReference type="FunFam" id="3.40.50.620:FF:000052">
    <property type="entry name" value="Sulfate adenylyltransferase"/>
    <property type="match status" value="1"/>
</dbReference>
<dbReference type="Gene3D" id="3.40.50.620">
    <property type="entry name" value="HUPs"/>
    <property type="match status" value="1"/>
</dbReference>
<dbReference type="Gene3D" id="3.40.50.300">
    <property type="entry name" value="P-loop containing nucleotide triphosphate hydrolases"/>
    <property type="match status" value="1"/>
</dbReference>
<dbReference type="Gene3D" id="3.10.400.10">
    <property type="entry name" value="Sulfate adenylyltransferase"/>
    <property type="match status" value="1"/>
</dbReference>
<dbReference type="HAMAP" id="MF_03106">
    <property type="entry name" value="Sulf_adenylyltr_euk"/>
    <property type="match status" value="1"/>
</dbReference>
<dbReference type="InterPro" id="IPR002891">
    <property type="entry name" value="APS_kinase"/>
</dbReference>
<dbReference type="InterPro" id="IPR025980">
    <property type="entry name" value="ATP-Sase_PUA-like_dom"/>
</dbReference>
<dbReference type="InterPro" id="IPR027417">
    <property type="entry name" value="P-loop_NTPase"/>
</dbReference>
<dbReference type="InterPro" id="IPR015947">
    <property type="entry name" value="PUA-like_sf"/>
</dbReference>
<dbReference type="InterPro" id="IPR014729">
    <property type="entry name" value="Rossmann-like_a/b/a_fold"/>
</dbReference>
<dbReference type="InterPro" id="IPR027535">
    <property type="entry name" value="Sulf_adenylyltr_euk"/>
</dbReference>
<dbReference type="InterPro" id="IPR050512">
    <property type="entry name" value="Sulf_AdTrans/APS_kinase"/>
</dbReference>
<dbReference type="InterPro" id="IPR024951">
    <property type="entry name" value="Sulfurylase_cat_dom"/>
</dbReference>
<dbReference type="InterPro" id="IPR002650">
    <property type="entry name" value="Sulphate_adenylyltransferase"/>
</dbReference>
<dbReference type="NCBIfam" id="TIGR00455">
    <property type="entry name" value="apsK"/>
    <property type="match status" value="1"/>
</dbReference>
<dbReference type="NCBIfam" id="NF004040">
    <property type="entry name" value="PRK05537.1"/>
    <property type="match status" value="1"/>
</dbReference>
<dbReference type="NCBIfam" id="TIGR00339">
    <property type="entry name" value="sopT"/>
    <property type="match status" value="1"/>
</dbReference>
<dbReference type="PANTHER" id="PTHR42700">
    <property type="entry name" value="SULFATE ADENYLYLTRANSFERASE"/>
    <property type="match status" value="1"/>
</dbReference>
<dbReference type="PANTHER" id="PTHR42700:SF1">
    <property type="entry name" value="SULFATE ADENYLYLTRANSFERASE"/>
    <property type="match status" value="1"/>
</dbReference>
<dbReference type="Pfam" id="PF01583">
    <property type="entry name" value="APS_kinase"/>
    <property type="match status" value="1"/>
</dbReference>
<dbReference type="Pfam" id="PF01747">
    <property type="entry name" value="ATP-sulfurylase"/>
    <property type="match status" value="1"/>
</dbReference>
<dbReference type="Pfam" id="PF14306">
    <property type="entry name" value="PUA_2"/>
    <property type="match status" value="1"/>
</dbReference>
<dbReference type="SUPFAM" id="SSF52374">
    <property type="entry name" value="Nucleotidylyl transferase"/>
    <property type="match status" value="1"/>
</dbReference>
<dbReference type="SUPFAM" id="SSF52540">
    <property type="entry name" value="P-loop containing nucleoside triphosphate hydrolases"/>
    <property type="match status" value="1"/>
</dbReference>
<dbReference type="SUPFAM" id="SSF88697">
    <property type="entry name" value="PUA domain-like"/>
    <property type="match status" value="1"/>
</dbReference>
<proteinExistence type="evidence at protein level"/>
<organism>
    <name type="scientific">Penicillium chrysogenum</name>
    <name type="common">Penicillium notatum</name>
    <dbReference type="NCBI Taxonomy" id="5076"/>
    <lineage>
        <taxon>Eukaryota</taxon>
        <taxon>Fungi</taxon>
        <taxon>Dikarya</taxon>
        <taxon>Ascomycota</taxon>
        <taxon>Pezizomycotina</taxon>
        <taxon>Eurotiomycetes</taxon>
        <taxon>Eurotiomycetidae</taxon>
        <taxon>Eurotiales</taxon>
        <taxon>Aspergillaceae</taxon>
        <taxon>Penicillium</taxon>
        <taxon>Penicillium chrysogenum species complex</taxon>
    </lineage>
</organism>
<keyword id="KW-0002">3D-structure</keyword>
<keyword id="KW-0021">Allosteric enzyme</keyword>
<keyword id="KW-0067">ATP-binding</keyword>
<keyword id="KW-0963">Cytoplasm</keyword>
<keyword id="KW-0903">Direct protein sequencing</keyword>
<keyword id="KW-0547">Nucleotide-binding</keyword>
<keyword id="KW-0548">Nucleotidyltransferase</keyword>
<keyword id="KW-0808">Transferase</keyword>
<sequence>MANAPHGGVLKDLLARDAPRQAELAAEAESLPAVTLTERQLCDLELIMNGGFSPLEGFMNQADYDRVCEDNRLADGNVFSMPITLDASQEVIDEKKLQAASRITLRDFRDDRNLAILTIDDIYRPDKTKEAKLVFGGDPEHPAIVYLNNTVKEFYIGGKIEAVNKLNHYDYVALRYTPAELRVHFDKLGWSRVVAFQTRNPMHRAHRELTVRAARSRQANVLIHPVVGLTKPGDIDHFTRVRAYQALLPRYPNGMAVLGLLGLAMRMGGPREAIWHAIIRKNHGATHFIVGRDHAGPGSNSKGEDFYGPYDAQHAVEKYKDELGIEVVEFQMVTYLPDTDEYRPVDQVPAGVKTLNISGTELRRRLRSAHIPEWFSYPEVVKILRESNPPRATQGFTIFLTGYMNSGKDAIARALQVTLNQQGGRSVSLLLGDTVRHELSSELGFTREDRHTNIQRIAFVATELTRAGAAVIAAPIAPYEESRKFARDAVSQAGSFFLVHVATPLEHCEQSDKRGIYAAARRGEIKGFTGVDDPYETPEKADLVVDFSKQSVRSIVHEIILVLESQGFLERQ</sequence>
<feature type="chain" id="PRO_0000105951" description="Sulfate adenylyltransferase">
    <location>
        <begin position="1"/>
        <end position="572"/>
    </location>
</feature>
<feature type="region of interest" description="N-terminal" evidence="1 4">
    <location>
        <begin position="1"/>
        <end position="169"/>
    </location>
</feature>
<feature type="region of interest" description="Catalytic" evidence="1 4">
    <location>
        <begin position="170"/>
        <end position="393"/>
    </location>
</feature>
<feature type="region of interest" description="Allosteric regulation domain; adenylyl-sulfate kinase-like" evidence="1 4">
    <location>
        <begin position="394"/>
        <end position="572"/>
    </location>
</feature>
<feature type="active site" evidence="1">
    <location>
        <position position="198"/>
    </location>
</feature>
<feature type="active site" evidence="1">
    <location>
        <position position="199"/>
    </location>
</feature>
<feature type="active site" evidence="1">
    <location>
        <position position="200"/>
    </location>
</feature>
<feature type="binding site" evidence="1 2">
    <location>
        <begin position="197"/>
        <end position="200"/>
    </location>
    <ligand>
        <name>ATP</name>
        <dbReference type="ChEBI" id="CHEBI:30616"/>
    </ligand>
</feature>
<feature type="binding site" evidence="1 2">
    <location>
        <position position="197"/>
    </location>
    <ligand>
        <name>sulfate</name>
        <dbReference type="ChEBI" id="CHEBI:16189"/>
    </ligand>
</feature>
<feature type="binding site" evidence="1 2">
    <location>
        <position position="199"/>
    </location>
    <ligand>
        <name>sulfate</name>
        <dbReference type="ChEBI" id="CHEBI:16189"/>
    </ligand>
</feature>
<feature type="binding site" evidence="1 2">
    <location>
        <begin position="291"/>
        <end position="294"/>
    </location>
    <ligand>
        <name>ATP</name>
        <dbReference type="ChEBI" id="CHEBI:30616"/>
    </ligand>
</feature>
<feature type="binding site" evidence="1 2">
    <location>
        <position position="295"/>
    </location>
    <ligand>
        <name>sulfate</name>
        <dbReference type="ChEBI" id="CHEBI:16189"/>
    </ligand>
</feature>
<feature type="binding site" evidence="1 2">
    <location>
        <position position="333"/>
    </location>
    <ligand>
        <name>ATP</name>
        <dbReference type="ChEBI" id="CHEBI:30616"/>
    </ligand>
</feature>
<feature type="binding site" evidence="1 3">
    <location>
        <begin position="433"/>
        <end position="436"/>
    </location>
    <ligand>
        <name>3'-phosphoadenylyl sulfate</name>
        <dbReference type="ChEBI" id="CHEBI:58339"/>
        <note>allosteric inhibitor</note>
    </ligand>
</feature>
<feature type="binding site" evidence="1 3">
    <location>
        <position position="450"/>
    </location>
    <ligand>
        <name>3'-phosphoadenylyl sulfate</name>
        <dbReference type="ChEBI" id="CHEBI:58339"/>
        <note>allosteric inhibitor</note>
    </ligand>
</feature>
<feature type="binding site" evidence="1 3">
    <location>
        <begin position="476"/>
        <end position="477"/>
    </location>
    <ligand>
        <name>3'-phosphoadenylyl sulfate</name>
        <dbReference type="ChEBI" id="CHEBI:58339"/>
        <note>allosteric inhibitor</note>
    </ligand>
</feature>
<feature type="binding site" evidence="1 3">
    <location>
        <position position="514"/>
    </location>
    <ligand>
        <name>3'-phosphoadenylyl sulfate</name>
        <dbReference type="ChEBI" id="CHEBI:58339"/>
        <note>allosteric inhibitor</note>
    </ligand>
</feature>
<feature type="site" description="Transition state stabilizer" evidence="1">
    <location>
        <position position="203"/>
    </location>
</feature>
<feature type="site" description="Transition state stabilizer" evidence="1 4">
    <location>
        <position position="206"/>
    </location>
</feature>
<feature type="site" description="Induces change in substrate recognition on ATP binding" evidence="1">
    <location>
        <position position="330"/>
    </location>
</feature>
<feature type="helix" evidence="6">
    <location>
        <begin position="13"/>
        <end position="16"/>
    </location>
</feature>
<feature type="helix" evidence="5">
    <location>
        <begin position="18"/>
        <end position="20"/>
    </location>
</feature>
<feature type="helix" evidence="6">
    <location>
        <begin position="21"/>
        <end position="28"/>
    </location>
</feature>
<feature type="strand" evidence="6">
    <location>
        <begin position="33"/>
        <end position="36"/>
    </location>
</feature>
<feature type="helix" evidence="6">
    <location>
        <begin position="38"/>
        <end position="48"/>
    </location>
</feature>
<feature type="turn" evidence="6">
    <location>
        <begin position="51"/>
        <end position="54"/>
    </location>
</feature>
<feature type="helix" evidence="6">
    <location>
        <begin position="61"/>
        <end position="70"/>
    </location>
</feature>
<feature type="helix" evidence="6">
    <location>
        <begin position="89"/>
        <end position="94"/>
    </location>
</feature>
<feature type="strand" evidence="6">
    <location>
        <begin position="102"/>
        <end position="107"/>
    </location>
</feature>
<feature type="turn" evidence="6">
    <location>
        <begin position="108"/>
        <end position="110"/>
    </location>
</feature>
<feature type="strand" evidence="6">
    <location>
        <begin position="113"/>
        <end position="120"/>
    </location>
</feature>
<feature type="helix" evidence="6">
    <location>
        <begin position="127"/>
        <end position="133"/>
    </location>
</feature>
<feature type="helix" evidence="6">
    <location>
        <begin position="142"/>
        <end position="149"/>
    </location>
</feature>
<feature type="strand" evidence="6">
    <location>
        <begin position="153"/>
        <end position="155"/>
    </location>
</feature>
<feature type="strand" evidence="6">
    <location>
        <begin position="158"/>
        <end position="162"/>
    </location>
</feature>
<feature type="helix" evidence="6">
    <location>
        <begin position="172"/>
        <end position="174"/>
    </location>
</feature>
<feature type="helix" evidence="6">
    <location>
        <begin position="178"/>
        <end position="187"/>
    </location>
</feature>
<feature type="strand" evidence="6">
    <location>
        <begin position="192"/>
        <end position="196"/>
    </location>
</feature>
<feature type="helix" evidence="6">
    <location>
        <begin position="204"/>
        <end position="216"/>
    </location>
</feature>
<feature type="strand" evidence="6">
    <location>
        <begin position="220"/>
        <end position="223"/>
    </location>
</feature>
<feature type="helix" evidence="6">
    <location>
        <begin position="235"/>
        <end position="247"/>
    </location>
</feature>
<feature type="helix" evidence="6">
    <location>
        <begin position="248"/>
        <end position="250"/>
    </location>
</feature>
<feature type="strand" evidence="6">
    <location>
        <begin position="255"/>
        <end position="258"/>
    </location>
</feature>
<feature type="helix" evidence="6">
    <location>
        <begin position="269"/>
        <end position="283"/>
    </location>
</feature>
<feature type="strand" evidence="6">
    <location>
        <begin position="286"/>
        <end position="290"/>
    </location>
</feature>
<feature type="turn" evidence="6">
    <location>
        <begin position="292"/>
        <end position="295"/>
    </location>
</feature>
<feature type="strand" evidence="5">
    <location>
        <begin position="305"/>
        <end position="307"/>
    </location>
</feature>
<feature type="helix" evidence="6">
    <location>
        <begin position="311"/>
        <end position="323"/>
    </location>
</feature>
<feature type="strand" evidence="6">
    <location>
        <begin position="326"/>
        <end position="329"/>
    </location>
</feature>
<feature type="strand" evidence="5">
    <location>
        <begin position="333"/>
        <end position="336"/>
    </location>
</feature>
<feature type="turn" evidence="6">
    <location>
        <begin position="337"/>
        <end position="340"/>
    </location>
</feature>
<feature type="strand" evidence="6">
    <location>
        <begin position="345"/>
        <end position="348"/>
    </location>
</feature>
<feature type="strand" evidence="5">
    <location>
        <begin position="350"/>
        <end position="352"/>
    </location>
</feature>
<feature type="helix" evidence="6">
    <location>
        <begin position="359"/>
        <end position="368"/>
    </location>
</feature>
<feature type="turn" evidence="6">
    <location>
        <begin position="373"/>
        <end position="375"/>
    </location>
</feature>
<feature type="helix" evidence="6">
    <location>
        <begin position="378"/>
        <end position="385"/>
    </location>
</feature>
<feature type="turn" evidence="6">
    <location>
        <begin position="391"/>
        <end position="393"/>
    </location>
</feature>
<feature type="strand" evidence="6">
    <location>
        <begin position="396"/>
        <end position="401"/>
    </location>
</feature>
<feature type="helix" evidence="6">
    <location>
        <begin position="408"/>
        <end position="422"/>
    </location>
</feature>
<feature type="strand" evidence="6">
    <location>
        <begin position="427"/>
        <end position="431"/>
    </location>
</feature>
<feature type="helix" evidence="6">
    <location>
        <begin position="432"/>
        <end position="438"/>
    </location>
</feature>
<feature type="helix" evidence="6">
    <location>
        <begin position="447"/>
        <end position="466"/>
    </location>
</feature>
<feature type="strand" evidence="6">
    <location>
        <begin position="470"/>
        <end position="474"/>
    </location>
</feature>
<feature type="helix" evidence="6">
    <location>
        <begin position="480"/>
        <end position="491"/>
    </location>
</feature>
<feature type="strand" evidence="6">
    <location>
        <begin position="494"/>
        <end position="501"/>
    </location>
</feature>
<feature type="helix" evidence="6">
    <location>
        <begin position="505"/>
        <end position="511"/>
    </location>
</feature>
<feature type="helix" evidence="6">
    <location>
        <begin position="516"/>
        <end position="521"/>
    </location>
</feature>
<feature type="strand" evidence="6">
    <location>
        <begin position="524"/>
        <end position="527"/>
    </location>
</feature>
<feature type="turn" evidence="6">
    <location>
        <begin position="529"/>
        <end position="531"/>
    </location>
</feature>
<feature type="strand" evidence="6">
    <location>
        <begin position="542"/>
        <end position="545"/>
    </location>
</feature>
<feature type="turn" evidence="6">
    <location>
        <begin position="547"/>
        <end position="549"/>
    </location>
</feature>
<feature type="helix" evidence="6">
    <location>
        <begin position="552"/>
        <end position="565"/>
    </location>
</feature>
<feature type="turn" evidence="6">
    <location>
        <begin position="566"/>
        <end position="569"/>
    </location>
</feature>
<evidence type="ECO:0000255" key="1">
    <source>
        <dbReference type="HAMAP-Rule" id="MF_03106"/>
    </source>
</evidence>
<evidence type="ECO:0000269" key="2">
    <source>
    </source>
</evidence>
<evidence type="ECO:0000269" key="3">
    <source>
    </source>
</evidence>
<evidence type="ECO:0000305" key="4">
    <source>
    </source>
</evidence>
<evidence type="ECO:0007829" key="5">
    <source>
        <dbReference type="PDB" id="1I2D"/>
    </source>
</evidence>
<evidence type="ECO:0007829" key="6">
    <source>
        <dbReference type="PDB" id="1M8P"/>
    </source>
</evidence>
<reference key="1">
    <citation type="journal article" date="1994" name="J. Biol. Chem.">
        <title>Cloning and sequencing of ATP sulfurylase from Penicillium chrysogenum. Identification of a likely allosteric domain.</title>
        <authorList>
            <person name="Foster B.A."/>
            <person name="Thomas S.M."/>
            <person name="Mahr J.A."/>
            <person name="Renosto F."/>
            <person name="Patel H.C."/>
            <person name="Segel I.H."/>
        </authorList>
    </citation>
    <scope>NUCLEOTIDE SEQUENCE [MRNA]</scope>
    <scope>PARTIAL PROTEIN SEQUENCE</scope>
    <source>
        <strain>ATCC 24791 / PS-75</strain>
    </source>
</reference>
<reference key="2">
    <citation type="journal article" date="1989" name="J. Biol. Chem.">
        <title>The 'regulatory' sulfhydryl group of Penicillium chrysogenum ATP sulfurylase. Cooperative ligand binding after SH modification; chemical and thermodynamic properties.</title>
        <authorList>
            <person name="Martin R.L."/>
            <person name="Daley L.A."/>
            <person name="Lovric Z."/>
            <person name="Wailes L.M."/>
            <person name="Renosto F."/>
            <person name="Segel I.H."/>
        </authorList>
    </citation>
    <scope>PROTEIN SEQUENCE OF 487-517</scope>
</reference>
<reference key="3">
    <citation type="journal article" date="2001" name="Biochemistry">
        <title>Crystal structure of ATP sulfurylase from Penicillium chrysogenum: insights into the allosteric regulation of sulfate assimilation.</title>
        <authorList>
            <person name="MacRae I.J."/>
            <person name="Segel I.H."/>
            <person name="Fisher A.J."/>
        </authorList>
    </citation>
    <scope>X-RAY CRYSTALLOGRAPHY (2.81 ANGSTROMS) IN COMPLEX WITH SUBSTRATE AND ALLOSTERIC INHIBITOR</scope>
</reference>
<reference key="4">
    <citation type="journal article" date="2002" name="Nat. Struct. Biol.">
        <title>Allosteric inhibition via R-state destabilization in ATP sulfurylase from Penicillium chrysogenum.</title>
        <authorList>
            <person name="MacRae I.J."/>
            <person name="Segel I.H."/>
            <person name="Fisher A.J."/>
        </authorList>
    </citation>
    <scope>X-RAY CRYSTALLOGRAPHY (2.6 ANGSTROMS) IN COMPLEX WITH ALLOSTERIC INHIBITOR</scope>
</reference>